<accession>P57623</accession>
<protein>
    <recommendedName>
        <fullName evidence="1">Deoxyuridine 5'-triphosphate nucleotidohydrolase</fullName>
        <shortName evidence="1">dUTPase</shortName>
        <ecNumber evidence="1">3.6.1.23</ecNumber>
    </recommendedName>
    <alternativeName>
        <fullName evidence="1">dUTP pyrophosphatase</fullName>
    </alternativeName>
</protein>
<keyword id="KW-0378">Hydrolase</keyword>
<keyword id="KW-0460">Magnesium</keyword>
<keyword id="KW-0479">Metal-binding</keyword>
<keyword id="KW-0546">Nucleotide metabolism</keyword>
<keyword id="KW-1185">Reference proteome</keyword>
<feature type="chain" id="PRO_0000182837" description="Deoxyuridine 5'-triphosphate nucleotidohydrolase">
    <location>
        <begin position="1"/>
        <end position="154"/>
    </location>
</feature>
<feature type="binding site" evidence="1">
    <location>
        <begin position="70"/>
        <end position="72"/>
    </location>
    <ligand>
        <name>substrate</name>
    </ligand>
</feature>
<feature type="binding site" evidence="1">
    <location>
        <position position="83"/>
    </location>
    <ligand>
        <name>substrate</name>
    </ligand>
</feature>
<feature type="binding site" evidence="1">
    <location>
        <begin position="87"/>
        <end position="89"/>
    </location>
    <ligand>
        <name>substrate</name>
    </ligand>
</feature>
<feature type="binding site" evidence="1">
    <location>
        <position position="97"/>
    </location>
    <ligand>
        <name>substrate</name>
    </ligand>
</feature>
<reference key="1">
    <citation type="journal article" date="2000" name="Nature">
        <title>Genome sequence of the endocellular bacterial symbiont of aphids Buchnera sp. APS.</title>
        <authorList>
            <person name="Shigenobu S."/>
            <person name="Watanabe H."/>
            <person name="Hattori M."/>
            <person name="Sakaki Y."/>
            <person name="Ishikawa H."/>
        </authorList>
    </citation>
    <scope>NUCLEOTIDE SEQUENCE [LARGE SCALE GENOMIC DNA]</scope>
    <source>
        <strain>APS</strain>
    </source>
</reference>
<dbReference type="EC" id="3.6.1.23" evidence="1"/>
<dbReference type="EMBL" id="BA000003">
    <property type="protein sequence ID" value="BAB13250.1"/>
    <property type="molecule type" value="Genomic_DNA"/>
</dbReference>
<dbReference type="RefSeq" id="NP_240364.1">
    <property type="nucleotide sequence ID" value="NC_002528.1"/>
</dbReference>
<dbReference type="RefSeq" id="WP_009874508.1">
    <property type="nucleotide sequence ID" value="NZ_AP036055.1"/>
</dbReference>
<dbReference type="SMR" id="P57623"/>
<dbReference type="STRING" id="563178.BUAP5A_553"/>
<dbReference type="EnsemblBacteria" id="BAB13250">
    <property type="protein sequence ID" value="BAB13250"/>
    <property type="gene ID" value="BAB13250"/>
</dbReference>
<dbReference type="KEGG" id="buc:BU560"/>
<dbReference type="PATRIC" id="fig|107806.10.peg.563"/>
<dbReference type="eggNOG" id="COG0756">
    <property type="taxonomic scope" value="Bacteria"/>
</dbReference>
<dbReference type="HOGENOM" id="CLU_068508_1_1_6"/>
<dbReference type="UniPathway" id="UPA00610">
    <property type="reaction ID" value="UER00666"/>
</dbReference>
<dbReference type="Proteomes" id="UP000001806">
    <property type="component" value="Chromosome"/>
</dbReference>
<dbReference type="GO" id="GO:0004170">
    <property type="term" value="F:dUTP diphosphatase activity"/>
    <property type="evidence" value="ECO:0007669"/>
    <property type="project" value="UniProtKB-UniRule"/>
</dbReference>
<dbReference type="GO" id="GO:0000287">
    <property type="term" value="F:magnesium ion binding"/>
    <property type="evidence" value="ECO:0007669"/>
    <property type="project" value="UniProtKB-UniRule"/>
</dbReference>
<dbReference type="GO" id="GO:0006226">
    <property type="term" value="P:dUMP biosynthetic process"/>
    <property type="evidence" value="ECO:0007669"/>
    <property type="project" value="UniProtKB-UniRule"/>
</dbReference>
<dbReference type="GO" id="GO:0046081">
    <property type="term" value="P:dUTP catabolic process"/>
    <property type="evidence" value="ECO:0007669"/>
    <property type="project" value="InterPro"/>
</dbReference>
<dbReference type="CDD" id="cd07557">
    <property type="entry name" value="trimeric_dUTPase"/>
    <property type="match status" value="1"/>
</dbReference>
<dbReference type="FunFam" id="2.70.40.10:FF:000002">
    <property type="entry name" value="dUTP diphosphatase"/>
    <property type="match status" value="1"/>
</dbReference>
<dbReference type="Gene3D" id="2.70.40.10">
    <property type="match status" value="1"/>
</dbReference>
<dbReference type="HAMAP" id="MF_00116">
    <property type="entry name" value="dUTPase_bact"/>
    <property type="match status" value="1"/>
</dbReference>
<dbReference type="InterPro" id="IPR008181">
    <property type="entry name" value="dUTPase"/>
</dbReference>
<dbReference type="InterPro" id="IPR029054">
    <property type="entry name" value="dUTPase-like"/>
</dbReference>
<dbReference type="InterPro" id="IPR036157">
    <property type="entry name" value="dUTPase-like_sf"/>
</dbReference>
<dbReference type="InterPro" id="IPR033704">
    <property type="entry name" value="dUTPase_trimeric"/>
</dbReference>
<dbReference type="NCBIfam" id="TIGR00576">
    <property type="entry name" value="dut"/>
    <property type="match status" value="1"/>
</dbReference>
<dbReference type="NCBIfam" id="NF001862">
    <property type="entry name" value="PRK00601.1"/>
    <property type="match status" value="1"/>
</dbReference>
<dbReference type="PANTHER" id="PTHR11241">
    <property type="entry name" value="DEOXYURIDINE 5'-TRIPHOSPHATE NUCLEOTIDOHYDROLASE"/>
    <property type="match status" value="1"/>
</dbReference>
<dbReference type="PANTHER" id="PTHR11241:SF0">
    <property type="entry name" value="DEOXYURIDINE 5'-TRIPHOSPHATE NUCLEOTIDOHYDROLASE"/>
    <property type="match status" value="1"/>
</dbReference>
<dbReference type="Pfam" id="PF00692">
    <property type="entry name" value="dUTPase"/>
    <property type="match status" value="1"/>
</dbReference>
<dbReference type="SUPFAM" id="SSF51283">
    <property type="entry name" value="dUTPase-like"/>
    <property type="match status" value="1"/>
</dbReference>
<sequence>MSNIEIKILDSRMKNNFSLPSYATLGSSGLDLRACLDETVKLKAHKTILIPTGIAIYIANPNITALILPRSGLGHKKGIVLGNLVGLIDSDYQGQLMISLWNRSDQDFYVNPHDRVAQIIFVPIIRPCFLLVKNFNETSRSKKGFGHSGVSGVI</sequence>
<comment type="function">
    <text evidence="1">This enzyme is involved in nucleotide metabolism: it produces dUMP, the immediate precursor of thymidine nucleotides and it decreases the intracellular concentration of dUTP so that uracil cannot be incorporated into DNA.</text>
</comment>
<comment type="catalytic activity">
    <reaction evidence="1">
        <text>dUTP + H2O = dUMP + diphosphate + H(+)</text>
        <dbReference type="Rhea" id="RHEA:10248"/>
        <dbReference type="ChEBI" id="CHEBI:15377"/>
        <dbReference type="ChEBI" id="CHEBI:15378"/>
        <dbReference type="ChEBI" id="CHEBI:33019"/>
        <dbReference type="ChEBI" id="CHEBI:61555"/>
        <dbReference type="ChEBI" id="CHEBI:246422"/>
        <dbReference type="EC" id="3.6.1.23"/>
    </reaction>
</comment>
<comment type="cofactor">
    <cofactor evidence="1">
        <name>Mg(2+)</name>
        <dbReference type="ChEBI" id="CHEBI:18420"/>
    </cofactor>
</comment>
<comment type="pathway">
    <text evidence="1">Pyrimidine metabolism; dUMP biosynthesis; dUMP from dCTP (dUTP route): step 2/2.</text>
</comment>
<comment type="similarity">
    <text evidence="1">Belongs to the dUTPase family.</text>
</comment>
<name>DUT_BUCAI</name>
<gene>
    <name evidence="1" type="primary">dut</name>
    <name type="ordered locus">BU560</name>
</gene>
<proteinExistence type="inferred from homology"/>
<organism>
    <name type="scientific">Buchnera aphidicola subsp. Acyrthosiphon pisum (strain APS)</name>
    <name type="common">Acyrthosiphon pisum symbiotic bacterium</name>
    <dbReference type="NCBI Taxonomy" id="107806"/>
    <lineage>
        <taxon>Bacteria</taxon>
        <taxon>Pseudomonadati</taxon>
        <taxon>Pseudomonadota</taxon>
        <taxon>Gammaproteobacteria</taxon>
        <taxon>Enterobacterales</taxon>
        <taxon>Erwiniaceae</taxon>
        <taxon>Buchnera</taxon>
    </lineage>
</organism>
<evidence type="ECO:0000255" key="1">
    <source>
        <dbReference type="HAMAP-Rule" id="MF_00116"/>
    </source>
</evidence>